<accession>A5IAK4</accession>
<comment type="function">
    <text evidence="1">ATP-dependent carboxylate-amine ligase which exhibits weak glutamate--cysteine ligase activity.</text>
</comment>
<comment type="catalytic activity">
    <reaction evidence="1">
        <text>L-cysteine + L-glutamate + ATP = gamma-L-glutamyl-L-cysteine + ADP + phosphate + H(+)</text>
        <dbReference type="Rhea" id="RHEA:13285"/>
        <dbReference type="ChEBI" id="CHEBI:15378"/>
        <dbReference type="ChEBI" id="CHEBI:29985"/>
        <dbReference type="ChEBI" id="CHEBI:30616"/>
        <dbReference type="ChEBI" id="CHEBI:35235"/>
        <dbReference type="ChEBI" id="CHEBI:43474"/>
        <dbReference type="ChEBI" id="CHEBI:58173"/>
        <dbReference type="ChEBI" id="CHEBI:456216"/>
        <dbReference type="EC" id="6.3.2.2"/>
    </reaction>
</comment>
<comment type="similarity">
    <text evidence="1">Belongs to the glutamate--cysteine ligase type 2 family. YbdK subfamily.</text>
</comment>
<proteinExistence type="inferred from homology"/>
<feature type="chain" id="PRO_0000323504" description="Putative glutamate--cysteine ligase 2-1">
    <location>
        <begin position="1"/>
        <end position="383"/>
    </location>
</feature>
<evidence type="ECO:0000255" key="1">
    <source>
        <dbReference type="HAMAP-Rule" id="MF_01609"/>
    </source>
</evidence>
<reference key="1">
    <citation type="submission" date="2006-11" db="EMBL/GenBank/DDBJ databases">
        <title>Identification and characterization of a new conjugation/ type IVA secretion system (trb/tra) of L. pneumophila Corby localized on a mobile genomic island.</title>
        <authorList>
            <person name="Gloeckner G."/>
            <person name="Albert-Weissenberger C."/>
            <person name="Weinmann E."/>
            <person name="Jacobi S."/>
            <person name="Schunder E."/>
            <person name="Steinert M."/>
            <person name="Buchrieser C."/>
            <person name="Hacker J."/>
            <person name="Heuner K."/>
        </authorList>
    </citation>
    <scope>NUCLEOTIDE SEQUENCE [LARGE SCALE GENOMIC DNA]</scope>
    <source>
        <strain>Corby</strain>
    </source>
</reference>
<sequence length="383" mass="44733">MRLLSFKKSKIVSIGTELEFQIIDRSSLSLVSRSKELMRALKDMRYRDQIKPEITQSMIEINSSIHQSAKEMYDELLELQKILVETAASIDIAFCGGGTHPFQQWTMQKIFPSKRFKKKFNQYRYLSKRATVFGQHIHIGCPTGDDAIYLTHALARYVPHFIAISASSPFYLGINTNYCSSRSTIFNAFPLSGVIPYLRNWQEFSDYYRKMYRWKIIENMKDFYWDIRPKPELGTIEIRVCDTPLTLRKSILITAYIQALALYLLKEKPVQLSHDLYYVYNYNRFQASRHGLEGELTVTDKDKPILIMDDILETIKKIEQYINGLGNSEYIEELYSDVINKQNDSVLINKIYKQDGSFTKLVAAQCELWLSDSKDRKWMTQPS</sequence>
<organism>
    <name type="scientific">Legionella pneumophila (strain Corby)</name>
    <dbReference type="NCBI Taxonomy" id="400673"/>
    <lineage>
        <taxon>Bacteria</taxon>
        <taxon>Pseudomonadati</taxon>
        <taxon>Pseudomonadota</taxon>
        <taxon>Gammaproteobacteria</taxon>
        <taxon>Legionellales</taxon>
        <taxon>Legionellaceae</taxon>
        <taxon>Legionella</taxon>
    </lineage>
</organism>
<dbReference type="EC" id="6.3.2.2" evidence="1"/>
<dbReference type="EMBL" id="CP000675">
    <property type="protein sequence ID" value="ABQ54404.1"/>
    <property type="molecule type" value="Genomic_DNA"/>
</dbReference>
<dbReference type="RefSeq" id="WP_011947624.1">
    <property type="nucleotide sequence ID" value="NC_009494.2"/>
</dbReference>
<dbReference type="SMR" id="A5IAK4"/>
<dbReference type="KEGG" id="lpc:LPC_0414"/>
<dbReference type="HOGENOM" id="CLU_044848_1_1_6"/>
<dbReference type="GO" id="GO:0005524">
    <property type="term" value="F:ATP binding"/>
    <property type="evidence" value="ECO:0007669"/>
    <property type="project" value="UniProtKB-KW"/>
</dbReference>
<dbReference type="GO" id="GO:0004357">
    <property type="term" value="F:glutamate-cysteine ligase activity"/>
    <property type="evidence" value="ECO:0007669"/>
    <property type="project" value="UniProtKB-EC"/>
</dbReference>
<dbReference type="GO" id="GO:0042398">
    <property type="term" value="P:modified amino acid biosynthetic process"/>
    <property type="evidence" value="ECO:0007669"/>
    <property type="project" value="InterPro"/>
</dbReference>
<dbReference type="Gene3D" id="3.30.590.20">
    <property type="match status" value="1"/>
</dbReference>
<dbReference type="HAMAP" id="MF_01609">
    <property type="entry name" value="Glu_cys_ligase_2"/>
    <property type="match status" value="1"/>
</dbReference>
<dbReference type="InterPro" id="IPR050141">
    <property type="entry name" value="GCL_type2/YbdK_subfam"/>
</dbReference>
<dbReference type="InterPro" id="IPR006336">
    <property type="entry name" value="GCS2"/>
</dbReference>
<dbReference type="InterPro" id="IPR014746">
    <property type="entry name" value="Gln_synth/guanido_kin_cat_dom"/>
</dbReference>
<dbReference type="InterPro" id="IPR011793">
    <property type="entry name" value="YbdK"/>
</dbReference>
<dbReference type="NCBIfam" id="TIGR02050">
    <property type="entry name" value="gshA_cyan_rel"/>
    <property type="match status" value="1"/>
</dbReference>
<dbReference type="NCBIfam" id="NF010040">
    <property type="entry name" value="PRK13516.1"/>
    <property type="match status" value="1"/>
</dbReference>
<dbReference type="PANTHER" id="PTHR36510">
    <property type="entry name" value="GLUTAMATE--CYSTEINE LIGASE 2-RELATED"/>
    <property type="match status" value="1"/>
</dbReference>
<dbReference type="PANTHER" id="PTHR36510:SF1">
    <property type="entry name" value="GLUTAMATE--CYSTEINE LIGASE 2-RELATED"/>
    <property type="match status" value="1"/>
</dbReference>
<dbReference type="Pfam" id="PF04107">
    <property type="entry name" value="GCS2"/>
    <property type="match status" value="1"/>
</dbReference>
<dbReference type="SUPFAM" id="SSF55931">
    <property type="entry name" value="Glutamine synthetase/guanido kinase"/>
    <property type="match status" value="1"/>
</dbReference>
<keyword id="KW-0067">ATP-binding</keyword>
<keyword id="KW-0436">Ligase</keyword>
<keyword id="KW-0547">Nucleotide-binding</keyword>
<name>GCS21_LEGPC</name>
<gene>
    <name type="ordered locus">LPC_0414</name>
</gene>
<protein>
    <recommendedName>
        <fullName evidence="1">Putative glutamate--cysteine ligase 2-1</fullName>
        <ecNumber evidence="1">6.3.2.2</ecNumber>
    </recommendedName>
    <alternativeName>
        <fullName evidence="1">Gamma-glutamylcysteine synthetase 2-1</fullName>
        <shortName evidence="1">GCS 2-1</shortName>
        <shortName evidence="1">Gamma-GCS 2-1</shortName>
    </alternativeName>
</protein>